<evidence type="ECO:0000255" key="1"/>
<evidence type="ECO:0000269" key="2">
    <source>
    </source>
</evidence>
<evidence type="ECO:0000303" key="3">
    <source>
    </source>
</evidence>
<evidence type="ECO:0000305" key="4"/>
<evidence type="ECO:0000312" key="5">
    <source>
        <dbReference type="EMBL" id="BAC10381.1"/>
    </source>
</evidence>
<evidence type="ECO:0000312" key="6">
    <source>
        <dbReference type="EMBL" id="BAD31944.1"/>
    </source>
</evidence>
<evidence type="ECO:0000312" key="7">
    <source>
        <dbReference type="EMBL" id="BAF20618.1"/>
    </source>
</evidence>
<evidence type="ECO:0000312" key="8">
    <source>
        <dbReference type="EMBL" id="EAZ38424.1"/>
    </source>
</evidence>
<comment type="function">
    <text evidence="2">Mediates active uptake of hexoses by sugar:proton symport. Can transport glucose, xylose and 3-O-methylglucose. May be involved in the accumulation of monosaccharides required for cell wall synthesis during root development.</text>
</comment>
<comment type="subcellular location">
    <subcellularLocation>
        <location evidence="1">Membrane</location>
        <topology evidence="1">Multi-pass membrane protein</topology>
    </subcellularLocation>
</comment>
<comment type="alternative products">
    <event type="alternative splicing"/>
    <isoform>
        <id>Q7EZD7-1</id>
        <name>1</name>
        <sequence type="displayed"/>
    </isoform>
    <isoform>
        <id>Q7EZD7-2</id>
        <name>2</name>
        <sequence type="described" ref="VSP_059026"/>
    </isoform>
</comment>
<comment type="tissue specificity">
    <text evidence="2">Highly expressed in roots. Expressed in xylem and sclerenchyma cells of roots. Expressed at low levels in leaves.</text>
</comment>
<comment type="similarity">
    <text evidence="4">Belongs to the major facilitator superfamily. Sugar transporter (TC 2.A.1.1) family.</text>
</comment>
<dbReference type="EMBL" id="AB052885">
    <property type="protein sequence ID" value="BAB19864.1"/>
    <property type="molecule type" value="mRNA"/>
</dbReference>
<dbReference type="EMBL" id="AP004673">
    <property type="protein sequence ID" value="BAC10381.1"/>
    <property type="molecule type" value="Genomic_DNA"/>
</dbReference>
<dbReference type="EMBL" id="AP004673">
    <property type="protein sequence ID" value="BAC81184.1"/>
    <property type="molecule type" value="Genomic_DNA"/>
</dbReference>
<dbReference type="EMBL" id="AP006186">
    <property type="protein sequence ID" value="BAD31944.1"/>
    <property type="molecule type" value="Genomic_DNA"/>
</dbReference>
<dbReference type="EMBL" id="AP006186">
    <property type="protein sequence ID" value="BAD31945.1"/>
    <property type="molecule type" value="Genomic_DNA"/>
</dbReference>
<dbReference type="EMBL" id="AP008213">
    <property type="protein sequence ID" value="BAF20618.1"/>
    <property type="molecule type" value="Genomic_DNA"/>
</dbReference>
<dbReference type="EMBL" id="AP014963">
    <property type="protein sequence ID" value="BAS99714.1"/>
    <property type="molecule type" value="Genomic_DNA"/>
</dbReference>
<dbReference type="EMBL" id="AP014963">
    <property type="protein sequence ID" value="BAS99715.1"/>
    <property type="molecule type" value="Genomic_DNA"/>
</dbReference>
<dbReference type="EMBL" id="CM000144">
    <property type="protein sequence ID" value="EAZ38424.1"/>
    <property type="molecule type" value="Genomic_DNA"/>
</dbReference>
<dbReference type="EMBL" id="AK099079">
    <property type="protein sequence ID" value="BAG93911.1"/>
    <property type="molecule type" value="mRNA"/>
</dbReference>
<dbReference type="EMBL" id="AK103047">
    <property type="protein sequence ID" value="BAG95854.1"/>
    <property type="molecule type" value="mRNA"/>
</dbReference>
<dbReference type="RefSeq" id="XP_015646448.1">
    <property type="nucleotide sequence ID" value="XM_015790962.1"/>
</dbReference>
<dbReference type="SMR" id="Q7EZD7"/>
<dbReference type="FunCoup" id="Q7EZD7">
    <property type="interactions" value="199"/>
</dbReference>
<dbReference type="STRING" id="39947.Q7EZD7"/>
<dbReference type="PaxDb" id="39947-Q7EZD7"/>
<dbReference type="EnsemblPlants" id="Os07t0106200-02">
    <molecule id="Q7EZD7-1"/>
    <property type="protein sequence ID" value="Os07t0106200-02"/>
    <property type="gene ID" value="Os07g0106200"/>
</dbReference>
<dbReference type="Gramene" id="Os07t0106200-02">
    <molecule id="Q7EZD7-1"/>
    <property type="protein sequence ID" value="Os07t0106200-02"/>
    <property type="gene ID" value="Os07g0106200"/>
</dbReference>
<dbReference type="KEGG" id="dosa:Os07g0106200"/>
<dbReference type="eggNOG" id="KOG0254">
    <property type="taxonomic scope" value="Eukaryota"/>
</dbReference>
<dbReference type="InParanoid" id="Q7EZD7"/>
<dbReference type="OMA" id="TFAADMG"/>
<dbReference type="OrthoDB" id="5296287at2759"/>
<dbReference type="Proteomes" id="UP000000763">
    <property type="component" value="Chromosome 7"/>
</dbReference>
<dbReference type="Proteomes" id="UP000007752">
    <property type="component" value="Chromosome 7"/>
</dbReference>
<dbReference type="Proteomes" id="UP000059680">
    <property type="component" value="Chromosome 7"/>
</dbReference>
<dbReference type="GO" id="GO:0016020">
    <property type="term" value="C:membrane"/>
    <property type="evidence" value="ECO:0007669"/>
    <property type="project" value="UniProtKB-SubCell"/>
</dbReference>
<dbReference type="GO" id="GO:0015145">
    <property type="term" value="F:monosaccharide transmembrane transporter activity"/>
    <property type="evidence" value="ECO:0007669"/>
    <property type="project" value="InterPro"/>
</dbReference>
<dbReference type="GO" id="GO:0015293">
    <property type="term" value="F:symporter activity"/>
    <property type="evidence" value="ECO:0007669"/>
    <property type="project" value="UniProtKB-KW"/>
</dbReference>
<dbReference type="CDD" id="cd17361">
    <property type="entry name" value="MFS_STP"/>
    <property type="match status" value="1"/>
</dbReference>
<dbReference type="FunFam" id="1.20.1250.20:FF:000002">
    <property type="entry name" value="Sugar transport protein 13"/>
    <property type="match status" value="1"/>
</dbReference>
<dbReference type="Gene3D" id="1.20.1250.20">
    <property type="entry name" value="MFS general substrate transporter like domains"/>
    <property type="match status" value="1"/>
</dbReference>
<dbReference type="InterPro" id="IPR020846">
    <property type="entry name" value="MFS_dom"/>
</dbReference>
<dbReference type="InterPro" id="IPR044778">
    <property type="entry name" value="MFS_STP/MST-like_plant"/>
</dbReference>
<dbReference type="InterPro" id="IPR005828">
    <property type="entry name" value="MFS_sugar_transport-like"/>
</dbReference>
<dbReference type="InterPro" id="IPR036259">
    <property type="entry name" value="MFS_trans_sf"/>
</dbReference>
<dbReference type="InterPro" id="IPR045262">
    <property type="entry name" value="STP/PLT_plant"/>
</dbReference>
<dbReference type="InterPro" id="IPR003663">
    <property type="entry name" value="Sugar/inositol_transpt"/>
</dbReference>
<dbReference type="InterPro" id="IPR005829">
    <property type="entry name" value="Sugar_transporter_CS"/>
</dbReference>
<dbReference type="NCBIfam" id="TIGR00879">
    <property type="entry name" value="SP"/>
    <property type="match status" value="1"/>
</dbReference>
<dbReference type="PANTHER" id="PTHR23500">
    <property type="entry name" value="SOLUTE CARRIER FAMILY 2, FACILITATED GLUCOSE TRANSPORTER"/>
    <property type="match status" value="1"/>
</dbReference>
<dbReference type="PANTHER" id="PTHR23500:SF574">
    <property type="entry name" value="SUGAR TRANSPORT PROTEIN 1"/>
    <property type="match status" value="1"/>
</dbReference>
<dbReference type="Pfam" id="PF00083">
    <property type="entry name" value="Sugar_tr"/>
    <property type="match status" value="1"/>
</dbReference>
<dbReference type="PRINTS" id="PR00171">
    <property type="entry name" value="SUGRTRNSPORT"/>
</dbReference>
<dbReference type="SUPFAM" id="SSF103473">
    <property type="entry name" value="MFS general substrate transporter"/>
    <property type="match status" value="1"/>
</dbReference>
<dbReference type="PROSITE" id="PS50850">
    <property type="entry name" value="MFS"/>
    <property type="match status" value="1"/>
</dbReference>
<dbReference type="PROSITE" id="PS00216">
    <property type="entry name" value="SUGAR_TRANSPORT_1"/>
    <property type="match status" value="1"/>
</dbReference>
<dbReference type="PROSITE" id="PS00217">
    <property type="entry name" value="SUGAR_TRANSPORT_2"/>
    <property type="match status" value="1"/>
</dbReference>
<reference key="1">
    <citation type="journal article" date="2000" name="Plant Cell Physiol.">
        <title>Characterization and expression of monosaccharide transporters (osMSTs) in rice.</title>
        <authorList>
            <person name="Toyofuku K."/>
            <person name="Kasahara M."/>
            <person name="Yamaguchi J."/>
        </authorList>
    </citation>
    <scope>NUCLEOTIDE SEQUENCE [MRNA] (ISOFORM 1)</scope>
    <scope>FUNCTION</scope>
    <scope>TISSUE SPECIFICITY</scope>
</reference>
<reference key="2">
    <citation type="journal article" date="2005" name="Nature">
        <title>The map-based sequence of the rice genome.</title>
        <authorList>
            <consortium name="International rice genome sequencing project (IRGSP)"/>
        </authorList>
    </citation>
    <scope>NUCLEOTIDE SEQUENCE [LARGE SCALE GENOMIC DNA]</scope>
    <source>
        <strain>cv. Nipponbare</strain>
    </source>
</reference>
<reference key="3">
    <citation type="journal article" date="2008" name="Nucleic Acids Res.">
        <title>The rice annotation project database (RAP-DB): 2008 update.</title>
        <authorList>
            <consortium name="The rice annotation project (RAP)"/>
        </authorList>
    </citation>
    <scope>GENOME REANNOTATION</scope>
    <source>
        <strain>cv. Nipponbare</strain>
    </source>
</reference>
<reference key="4">
    <citation type="journal article" date="2013" name="Rice">
        <title>Improvement of the Oryza sativa Nipponbare reference genome using next generation sequence and optical map data.</title>
        <authorList>
            <person name="Kawahara Y."/>
            <person name="de la Bastide M."/>
            <person name="Hamilton J.P."/>
            <person name="Kanamori H."/>
            <person name="McCombie W.R."/>
            <person name="Ouyang S."/>
            <person name="Schwartz D.C."/>
            <person name="Tanaka T."/>
            <person name="Wu J."/>
            <person name="Zhou S."/>
            <person name="Childs K.L."/>
            <person name="Davidson R.M."/>
            <person name="Lin H."/>
            <person name="Quesada-Ocampo L."/>
            <person name="Vaillancourt B."/>
            <person name="Sakai H."/>
            <person name="Lee S.S."/>
            <person name="Kim J."/>
            <person name="Numa H."/>
            <person name="Itoh T."/>
            <person name="Buell C.R."/>
            <person name="Matsumoto T."/>
        </authorList>
    </citation>
    <scope>GENOME REANNOTATION</scope>
    <source>
        <strain>cv. Nipponbare</strain>
    </source>
</reference>
<reference key="5">
    <citation type="journal article" date="2005" name="PLoS Biol.">
        <title>The genomes of Oryza sativa: a history of duplications.</title>
        <authorList>
            <person name="Yu J."/>
            <person name="Wang J."/>
            <person name="Lin W."/>
            <person name="Li S."/>
            <person name="Li H."/>
            <person name="Zhou J."/>
            <person name="Ni P."/>
            <person name="Dong W."/>
            <person name="Hu S."/>
            <person name="Zeng C."/>
            <person name="Zhang J."/>
            <person name="Zhang Y."/>
            <person name="Li R."/>
            <person name="Xu Z."/>
            <person name="Li S."/>
            <person name="Li X."/>
            <person name="Zheng H."/>
            <person name="Cong L."/>
            <person name="Lin L."/>
            <person name="Yin J."/>
            <person name="Geng J."/>
            <person name="Li G."/>
            <person name="Shi J."/>
            <person name="Liu J."/>
            <person name="Lv H."/>
            <person name="Li J."/>
            <person name="Wang J."/>
            <person name="Deng Y."/>
            <person name="Ran L."/>
            <person name="Shi X."/>
            <person name="Wang X."/>
            <person name="Wu Q."/>
            <person name="Li C."/>
            <person name="Ren X."/>
            <person name="Wang J."/>
            <person name="Wang X."/>
            <person name="Li D."/>
            <person name="Liu D."/>
            <person name="Zhang X."/>
            <person name="Ji Z."/>
            <person name="Zhao W."/>
            <person name="Sun Y."/>
            <person name="Zhang Z."/>
            <person name="Bao J."/>
            <person name="Han Y."/>
            <person name="Dong L."/>
            <person name="Ji J."/>
            <person name="Chen P."/>
            <person name="Wu S."/>
            <person name="Liu J."/>
            <person name="Xiao Y."/>
            <person name="Bu D."/>
            <person name="Tan J."/>
            <person name="Yang L."/>
            <person name="Ye C."/>
            <person name="Zhang J."/>
            <person name="Xu J."/>
            <person name="Zhou Y."/>
            <person name="Yu Y."/>
            <person name="Zhang B."/>
            <person name="Zhuang S."/>
            <person name="Wei H."/>
            <person name="Liu B."/>
            <person name="Lei M."/>
            <person name="Yu H."/>
            <person name="Li Y."/>
            <person name="Xu H."/>
            <person name="Wei S."/>
            <person name="He X."/>
            <person name="Fang L."/>
            <person name="Zhang Z."/>
            <person name="Zhang Y."/>
            <person name="Huang X."/>
            <person name="Su Z."/>
            <person name="Tong W."/>
            <person name="Li J."/>
            <person name="Tong Z."/>
            <person name="Li S."/>
            <person name="Ye J."/>
            <person name="Wang L."/>
            <person name="Fang L."/>
            <person name="Lei T."/>
            <person name="Chen C.-S."/>
            <person name="Chen H.-C."/>
            <person name="Xu Z."/>
            <person name="Li H."/>
            <person name="Huang H."/>
            <person name="Zhang F."/>
            <person name="Xu H."/>
            <person name="Li N."/>
            <person name="Zhao C."/>
            <person name="Li S."/>
            <person name="Dong L."/>
            <person name="Huang Y."/>
            <person name="Li L."/>
            <person name="Xi Y."/>
            <person name="Qi Q."/>
            <person name="Li W."/>
            <person name="Zhang B."/>
            <person name="Hu W."/>
            <person name="Zhang Y."/>
            <person name="Tian X."/>
            <person name="Jiao Y."/>
            <person name="Liang X."/>
            <person name="Jin J."/>
            <person name="Gao L."/>
            <person name="Zheng W."/>
            <person name="Hao B."/>
            <person name="Liu S.-M."/>
            <person name="Wang W."/>
            <person name="Yuan L."/>
            <person name="Cao M."/>
            <person name="McDermott J."/>
            <person name="Samudrala R."/>
            <person name="Wang J."/>
            <person name="Wong G.K.-S."/>
            <person name="Yang H."/>
        </authorList>
    </citation>
    <scope>NUCLEOTIDE SEQUENCE [LARGE SCALE GENOMIC DNA]</scope>
    <source>
        <strain>cv. Nipponbare</strain>
    </source>
</reference>
<reference key="6">
    <citation type="journal article" date="2003" name="Science">
        <title>Collection, mapping, and annotation of over 28,000 cDNA clones from japonica rice.</title>
        <authorList>
            <consortium name="The rice full-length cDNA consortium"/>
        </authorList>
    </citation>
    <scope>NUCLEOTIDE SEQUENCE [LARGE SCALE MRNA] (ISOFORMS 1 AND 2)</scope>
    <source>
        <strain>cv. Nipponbare</strain>
    </source>
</reference>
<feature type="chain" id="PRO_0000441037" description="Sugar transport protein MST3">
    <location>
        <begin position="1"/>
        <end position="518"/>
    </location>
</feature>
<feature type="topological domain" description="Cytoplasmic" evidence="4">
    <location>
        <begin position="1"/>
        <end position="18"/>
    </location>
</feature>
<feature type="transmembrane region" description="Helical" evidence="1">
    <location>
        <begin position="19"/>
        <end position="39"/>
    </location>
</feature>
<feature type="topological domain" description="Extracellular" evidence="4">
    <location>
        <begin position="40"/>
        <end position="80"/>
    </location>
</feature>
<feature type="transmembrane region" description="Helical" evidence="1">
    <location>
        <begin position="81"/>
        <end position="101"/>
    </location>
</feature>
<feature type="topological domain" description="Cytoplasmic" evidence="4">
    <location>
        <begin position="102"/>
        <end position="117"/>
    </location>
</feature>
<feature type="transmembrane region" description="Helical" evidence="1">
    <location>
        <begin position="118"/>
        <end position="138"/>
    </location>
</feature>
<feature type="topological domain" description="Extracellular" evidence="4">
    <location>
        <begin position="139"/>
        <end position="140"/>
    </location>
</feature>
<feature type="transmembrane region" description="Helical" evidence="1">
    <location>
        <begin position="141"/>
        <end position="161"/>
    </location>
</feature>
<feature type="topological domain" description="Cytoplasmic" evidence="4">
    <location>
        <begin position="162"/>
        <end position="167"/>
    </location>
</feature>
<feature type="transmembrane region" description="Helical" evidence="1">
    <location>
        <begin position="168"/>
        <end position="188"/>
    </location>
</feature>
<feature type="topological domain" description="Extracellular" evidence="4">
    <location>
        <begin position="189"/>
        <end position="202"/>
    </location>
</feature>
<feature type="transmembrane region" description="Helical" evidence="1">
    <location>
        <begin position="203"/>
        <end position="223"/>
    </location>
</feature>
<feature type="topological domain" description="Cytoplasmic" evidence="4">
    <location>
        <begin position="224"/>
        <end position="290"/>
    </location>
</feature>
<feature type="transmembrane region" description="Helical" evidence="1">
    <location>
        <begin position="291"/>
        <end position="311"/>
    </location>
</feature>
<feature type="topological domain" description="Extracellular" evidence="4">
    <location>
        <begin position="312"/>
        <end position="322"/>
    </location>
</feature>
<feature type="transmembrane region" description="Helical" evidence="1">
    <location>
        <begin position="323"/>
        <end position="343"/>
    </location>
</feature>
<feature type="topological domain" description="Cytoplasmic" evidence="4">
    <location>
        <begin position="344"/>
        <end position="351"/>
    </location>
</feature>
<feature type="transmembrane region" description="Helical" evidence="1">
    <location>
        <begin position="352"/>
        <end position="372"/>
    </location>
</feature>
<feature type="topological domain" description="Extracellular" evidence="4">
    <location>
        <begin position="373"/>
        <end position="387"/>
    </location>
</feature>
<feature type="transmembrane region" description="Helical" evidence="1">
    <location>
        <begin position="388"/>
        <end position="408"/>
    </location>
</feature>
<feature type="topological domain" description="Cytoplasmic" evidence="4">
    <location>
        <begin position="409"/>
        <end position="427"/>
    </location>
</feature>
<feature type="transmembrane region" description="Helical" evidence="1">
    <location>
        <begin position="428"/>
        <end position="448"/>
    </location>
</feature>
<feature type="topological domain" description="Extracellular" evidence="4">
    <location>
        <begin position="449"/>
        <end position="452"/>
    </location>
</feature>
<feature type="transmembrane region" description="Helical" evidence="1">
    <location>
        <begin position="453"/>
        <end position="473"/>
    </location>
</feature>
<feature type="topological domain" description="Cytoplasmic" evidence="4">
    <location>
        <begin position="474"/>
        <end position="518"/>
    </location>
</feature>
<feature type="splice variant" id="VSP_059026" description="In isoform 2.">
    <original>MAGGAVVSTGAGKDYPGKLTLFVFFTCVVAATGGLIFGYDIGISGGVTSMDPFLRKFFPEVYRKKQMADKNNQYCKYDNQLLQTFTSSLYLAALVSSFFAATVTRVLGRKWSMFAGGLTFLIGAALNGAAENVAMLIVGRILLGVGVGFAN</original>
    <variation>MMNGYDM</variation>
    <location>
        <begin position="1"/>
        <end position="151"/>
    </location>
</feature>
<gene>
    <name evidence="3" type="primary">MST3</name>
    <name evidence="7" type="ordered locus">Os07g0106200</name>
    <name evidence="4" type="ordered locus">LOC_Os07g01560</name>
    <name evidence="6" type="ORF">B1317D11.119-1</name>
    <name evidence="8" type="ORF">OsJ_22802</name>
    <name evidence="5" type="ORF">P0617C02.124-1</name>
</gene>
<proteinExistence type="evidence at transcript level"/>
<name>MST3_ORYSJ</name>
<sequence>MAGGAVVSTGAGKDYPGKLTLFVFFTCVVAATGGLIFGYDIGISGGVTSMDPFLRKFFPEVYRKKQMADKNNQYCKYDNQLLQTFTSSLYLAALVSSFFAATVTRVLGRKWSMFAGGLTFLIGAALNGAAENVAMLIVGRILLGVGVGFANQSVPVYLSEMAPARLRGMLNIGFQLMITIGILAAELINYGTAKIKAGWGWRVSLALAAVPAAIITLGSLFLPDTPNSLIDRGHPEAAERMLRRIRGSDVDVSEEYADLVAASEESKLVQHPWRNILRRKYRAQLTMAICIPFFQQLTGINVIMFYAPVLFDTLGFKSDASLMSAVITGLVNVFATLVSIFTVDRLGRRKLFLQGGAQMVVCQVVVGTLIAVKFGTSGIGDIPKGYAAVVVLFICMYVAGFAWSWGPLGWLVPSEIFPLEIRPAGQSINVSVNMLFTFVIAQAFLTMLCHMKFGLFYFFAGWVVIMTVFIALFLPETKNVPIEEMVLVWKSHWFWRRFIGDHDVHVGANHVSNNKLQP</sequence>
<organism>
    <name type="scientific">Oryza sativa subsp. japonica</name>
    <name type="common">Rice</name>
    <dbReference type="NCBI Taxonomy" id="39947"/>
    <lineage>
        <taxon>Eukaryota</taxon>
        <taxon>Viridiplantae</taxon>
        <taxon>Streptophyta</taxon>
        <taxon>Embryophyta</taxon>
        <taxon>Tracheophyta</taxon>
        <taxon>Spermatophyta</taxon>
        <taxon>Magnoliopsida</taxon>
        <taxon>Liliopsida</taxon>
        <taxon>Poales</taxon>
        <taxon>Poaceae</taxon>
        <taxon>BOP clade</taxon>
        <taxon>Oryzoideae</taxon>
        <taxon>Oryzeae</taxon>
        <taxon>Oryzinae</taxon>
        <taxon>Oryza</taxon>
        <taxon>Oryza sativa</taxon>
    </lineage>
</organism>
<protein>
    <recommendedName>
        <fullName evidence="4">Sugar transport protein MST3</fullName>
    </recommendedName>
    <alternativeName>
        <fullName evidence="3">Monosaccharide transporter 3</fullName>
        <shortName evidence="3">OsMST3</shortName>
    </alternativeName>
    <alternativeName>
        <fullName evidence="4">Sugar:proton symporter MST3</fullName>
    </alternativeName>
</protein>
<keyword id="KW-0025">Alternative splicing</keyword>
<keyword id="KW-0472">Membrane</keyword>
<keyword id="KW-1185">Reference proteome</keyword>
<keyword id="KW-0762">Sugar transport</keyword>
<keyword id="KW-0769">Symport</keyword>
<keyword id="KW-0812">Transmembrane</keyword>
<keyword id="KW-1133">Transmembrane helix</keyword>
<keyword id="KW-0813">Transport</keyword>
<accession>Q7EZD7</accession>
<accession>Q7XAK7</accession>
<accession>Q9FRT5</accession>